<protein>
    <recommendedName>
        <fullName evidence="1">UDP-3-O-acyl-N-acetylglucosamine deacetylase</fullName>
        <shortName evidence="1">UDP-3-O-acyl-GlcNAc deacetylase</shortName>
        <ecNumber evidence="1">3.5.1.108</ecNumber>
    </recommendedName>
    <alternativeName>
        <fullName evidence="1">UDP-3-O-[R-3-hydroxymyristoyl]-N-acetylglucosamine deacetylase</fullName>
    </alternativeName>
</protein>
<reference key="1">
    <citation type="journal article" date="1999" name="Nat. Genet.">
        <title>Comparative genomes of Chlamydia pneumoniae and C. trachomatis.</title>
        <authorList>
            <person name="Kalman S."/>
            <person name="Mitchell W.P."/>
            <person name="Marathe R."/>
            <person name="Lammel C.J."/>
            <person name="Fan J."/>
            <person name="Hyman R.W."/>
            <person name="Olinger L."/>
            <person name="Grimwood J."/>
            <person name="Davis R.W."/>
            <person name="Stephens R.S."/>
        </authorList>
    </citation>
    <scope>NUCLEOTIDE SEQUENCE [LARGE SCALE GENOMIC DNA]</scope>
    <source>
        <strain>CWL029</strain>
    </source>
</reference>
<reference key="2">
    <citation type="journal article" date="2000" name="Nucleic Acids Res.">
        <title>Genome sequences of Chlamydia trachomatis MoPn and Chlamydia pneumoniae AR39.</title>
        <authorList>
            <person name="Read T.D."/>
            <person name="Brunham R.C."/>
            <person name="Shen C."/>
            <person name="Gill S.R."/>
            <person name="Heidelberg J.F."/>
            <person name="White O."/>
            <person name="Hickey E.K."/>
            <person name="Peterson J.D."/>
            <person name="Utterback T.R."/>
            <person name="Berry K.J."/>
            <person name="Bass S."/>
            <person name="Linher K.D."/>
            <person name="Weidman J.F."/>
            <person name="Khouri H.M."/>
            <person name="Craven B."/>
            <person name="Bowman C."/>
            <person name="Dodson R.J."/>
            <person name="Gwinn M.L."/>
            <person name="Nelson W.C."/>
            <person name="DeBoy R.T."/>
            <person name="Kolonay J.F."/>
            <person name="McClarty G."/>
            <person name="Salzberg S.L."/>
            <person name="Eisen J.A."/>
            <person name="Fraser C.M."/>
        </authorList>
    </citation>
    <scope>NUCLEOTIDE SEQUENCE [LARGE SCALE GENOMIC DNA]</scope>
    <source>
        <strain>AR39</strain>
    </source>
</reference>
<reference key="3">
    <citation type="journal article" date="2000" name="Nucleic Acids Res.">
        <title>Comparison of whole genome sequences of Chlamydia pneumoniae J138 from Japan and CWL029 from USA.</title>
        <authorList>
            <person name="Shirai M."/>
            <person name="Hirakawa H."/>
            <person name="Kimoto M."/>
            <person name="Tabuchi M."/>
            <person name="Kishi F."/>
            <person name="Ouchi K."/>
            <person name="Shiba T."/>
            <person name="Ishii K."/>
            <person name="Hattori M."/>
            <person name="Kuhara S."/>
            <person name="Nakazawa T."/>
        </authorList>
    </citation>
    <scope>NUCLEOTIDE SEQUENCE [LARGE SCALE GENOMIC DNA]</scope>
    <source>
        <strain>J138</strain>
    </source>
</reference>
<reference key="4">
    <citation type="submission" date="2002-05" db="EMBL/GenBank/DDBJ databases">
        <title>The genome sequence of Chlamydia pneumoniae TW183 and comparison with other Chlamydia strains based on whole genome sequence analysis.</title>
        <authorList>
            <person name="Geng M.M."/>
            <person name="Schuhmacher A."/>
            <person name="Muehldorfer I."/>
            <person name="Bensch K.W."/>
            <person name="Schaefer K.P."/>
            <person name="Schneider S."/>
            <person name="Pohl T."/>
            <person name="Essig A."/>
            <person name="Marre R."/>
            <person name="Melchers K."/>
        </authorList>
    </citation>
    <scope>NUCLEOTIDE SEQUENCE [LARGE SCALE GENOMIC DNA]</scope>
    <source>
        <strain>TW-183</strain>
    </source>
</reference>
<gene>
    <name evidence="1" type="primary">lpxC</name>
    <name type="ordered locus">CPn_0652</name>
    <name type="ordered locus">CP_0095</name>
    <name type="ordered locus">CpB0678</name>
</gene>
<sequence>MLERTQRTLKREVRYSGVGIHLGKSSTLHLQPAQTNTGIVFQRQSASGNYENVPALLDHVYTTGRSTTLSRGSAVIATVEHLMAALRSNNIDNLIIQCSGEEIPIGDGSSNVFVELIDQAGICEQEDKVSIARLTRPVYYQHQDIFLAAFPSDELKISYTLHYPQSSTIGTQYKSLVINEESFRQEIAPCRTFALYNELCFLMEKGLIGGGCLDNAVVFKDDGIISRGQLRFADEPVRHKILDLIGDLSLVGRPFVAHVLAVGSGHSSNIAFGKKILEALEL</sequence>
<dbReference type="EC" id="3.5.1.108" evidence="1"/>
<dbReference type="EMBL" id="AE001363">
    <property type="protein sequence ID" value="AAD18791.1"/>
    <property type="molecule type" value="Genomic_DNA"/>
</dbReference>
<dbReference type="EMBL" id="AE002161">
    <property type="protein sequence ID" value="AAF37979.1"/>
    <property type="status" value="ALT_INIT"/>
    <property type="molecule type" value="Genomic_DNA"/>
</dbReference>
<dbReference type="EMBL" id="BA000008">
    <property type="protein sequence ID" value="BAA98859.1"/>
    <property type="molecule type" value="Genomic_DNA"/>
</dbReference>
<dbReference type="EMBL" id="AE009440">
    <property type="protein sequence ID" value="AAP98607.1"/>
    <property type="molecule type" value="Genomic_DNA"/>
</dbReference>
<dbReference type="PIR" id="A86572">
    <property type="entry name" value="A86572"/>
</dbReference>
<dbReference type="PIR" id="C81615">
    <property type="entry name" value="C81615"/>
</dbReference>
<dbReference type="PIR" id="E72051">
    <property type="entry name" value="E72051"/>
</dbReference>
<dbReference type="RefSeq" id="NP_224848.1">
    <property type="nucleotide sequence ID" value="NC_000922.1"/>
</dbReference>
<dbReference type="RefSeq" id="WP_010883290.1">
    <property type="nucleotide sequence ID" value="NZ_LN847257.1"/>
</dbReference>
<dbReference type="SMR" id="Q9Z7Q2"/>
<dbReference type="STRING" id="406984.CPK_ORF00052"/>
<dbReference type="GeneID" id="45050702"/>
<dbReference type="KEGG" id="cpa:CP_0095"/>
<dbReference type="KEGG" id="cpj:lpxC"/>
<dbReference type="KEGG" id="cpn:CPn_0652"/>
<dbReference type="KEGG" id="cpt:CpB0678"/>
<dbReference type="PATRIC" id="fig|115713.3.peg.722"/>
<dbReference type="eggNOG" id="COG0774">
    <property type="taxonomic scope" value="Bacteria"/>
</dbReference>
<dbReference type="HOGENOM" id="CLU_046528_1_0_0"/>
<dbReference type="OMA" id="IVFYRSD"/>
<dbReference type="OrthoDB" id="9772788at2"/>
<dbReference type="UniPathway" id="UPA00359">
    <property type="reaction ID" value="UER00478"/>
</dbReference>
<dbReference type="Proteomes" id="UP000000583">
    <property type="component" value="Chromosome"/>
</dbReference>
<dbReference type="Proteomes" id="UP000000801">
    <property type="component" value="Chromosome"/>
</dbReference>
<dbReference type="GO" id="GO:0016020">
    <property type="term" value="C:membrane"/>
    <property type="evidence" value="ECO:0007669"/>
    <property type="project" value="GOC"/>
</dbReference>
<dbReference type="GO" id="GO:0046872">
    <property type="term" value="F:metal ion binding"/>
    <property type="evidence" value="ECO:0007669"/>
    <property type="project" value="UniProtKB-KW"/>
</dbReference>
<dbReference type="GO" id="GO:0103117">
    <property type="term" value="F:UDP-3-O-acyl-N-acetylglucosamine deacetylase activity"/>
    <property type="evidence" value="ECO:0007669"/>
    <property type="project" value="UniProtKB-UniRule"/>
</dbReference>
<dbReference type="GO" id="GO:0009245">
    <property type="term" value="P:lipid A biosynthetic process"/>
    <property type="evidence" value="ECO:0007669"/>
    <property type="project" value="UniProtKB-UniRule"/>
</dbReference>
<dbReference type="Gene3D" id="3.30.230.20">
    <property type="entry name" value="lpxc deacetylase, domain 1"/>
    <property type="match status" value="1"/>
</dbReference>
<dbReference type="Gene3D" id="3.30.1700.10">
    <property type="entry name" value="lpxc deacetylase, domain 2"/>
    <property type="match status" value="1"/>
</dbReference>
<dbReference type="HAMAP" id="MF_00388">
    <property type="entry name" value="LpxC"/>
    <property type="match status" value="1"/>
</dbReference>
<dbReference type="InterPro" id="IPR020568">
    <property type="entry name" value="Ribosomal_Su5_D2-typ_SF"/>
</dbReference>
<dbReference type="InterPro" id="IPR004463">
    <property type="entry name" value="UDP-acyl_GlcNac_deAcase"/>
</dbReference>
<dbReference type="InterPro" id="IPR011334">
    <property type="entry name" value="UDP-acyl_GlcNac_deAcase_C"/>
</dbReference>
<dbReference type="InterPro" id="IPR015870">
    <property type="entry name" value="UDP-acyl_N-AcGlcN_deAcase_N"/>
</dbReference>
<dbReference type="NCBIfam" id="TIGR00325">
    <property type="entry name" value="lpxC"/>
    <property type="match status" value="1"/>
</dbReference>
<dbReference type="PANTHER" id="PTHR33694">
    <property type="entry name" value="UDP-3-O-ACYL-N-ACETYLGLUCOSAMINE DEACETYLASE 1, MITOCHONDRIAL-RELATED"/>
    <property type="match status" value="1"/>
</dbReference>
<dbReference type="PANTHER" id="PTHR33694:SF1">
    <property type="entry name" value="UDP-3-O-ACYL-N-ACETYLGLUCOSAMINE DEACETYLASE 1, MITOCHONDRIAL-RELATED"/>
    <property type="match status" value="1"/>
</dbReference>
<dbReference type="Pfam" id="PF03331">
    <property type="entry name" value="LpxC"/>
    <property type="match status" value="1"/>
</dbReference>
<dbReference type="SUPFAM" id="SSF54211">
    <property type="entry name" value="Ribosomal protein S5 domain 2-like"/>
    <property type="match status" value="2"/>
</dbReference>
<name>LPXC_CHLPN</name>
<comment type="function">
    <text evidence="1">Catalyzes the hydrolysis of UDP-3-O-myristoyl-N-acetylglucosamine to form UDP-3-O-myristoylglucosamine and acetate, the committed step in lipid A biosynthesis.</text>
</comment>
<comment type="catalytic activity">
    <reaction evidence="1">
        <text>a UDP-3-O-[(3R)-3-hydroxyacyl]-N-acetyl-alpha-D-glucosamine + H2O = a UDP-3-O-[(3R)-3-hydroxyacyl]-alpha-D-glucosamine + acetate</text>
        <dbReference type="Rhea" id="RHEA:67816"/>
        <dbReference type="ChEBI" id="CHEBI:15377"/>
        <dbReference type="ChEBI" id="CHEBI:30089"/>
        <dbReference type="ChEBI" id="CHEBI:137740"/>
        <dbReference type="ChEBI" id="CHEBI:173225"/>
        <dbReference type="EC" id="3.5.1.108"/>
    </reaction>
</comment>
<comment type="cofactor">
    <cofactor evidence="1">
        <name>Zn(2+)</name>
        <dbReference type="ChEBI" id="CHEBI:29105"/>
    </cofactor>
</comment>
<comment type="pathway">
    <text evidence="1">Glycolipid biosynthesis; lipid IV(A) biosynthesis; lipid IV(A) from (3R)-3-hydroxytetradecanoyl-[acyl-carrier-protein] and UDP-N-acetyl-alpha-D-glucosamine: step 2/6.</text>
</comment>
<comment type="similarity">
    <text evidence="1">Belongs to the LpxC family.</text>
</comment>
<comment type="sequence caution" evidence="2">
    <conflict type="erroneous initiation">
        <sequence resource="EMBL-CDS" id="AAF37979"/>
    </conflict>
</comment>
<proteinExistence type="inferred from homology"/>
<accession>Q9Z7Q2</accession>
<accession>Q9K2E0</accession>
<evidence type="ECO:0000255" key="1">
    <source>
        <dbReference type="HAMAP-Rule" id="MF_00388"/>
    </source>
</evidence>
<evidence type="ECO:0000305" key="2"/>
<organism>
    <name type="scientific">Chlamydia pneumoniae</name>
    <name type="common">Chlamydophila pneumoniae</name>
    <dbReference type="NCBI Taxonomy" id="83558"/>
    <lineage>
        <taxon>Bacteria</taxon>
        <taxon>Pseudomonadati</taxon>
        <taxon>Chlamydiota</taxon>
        <taxon>Chlamydiia</taxon>
        <taxon>Chlamydiales</taxon>
        <taxon>Chlamydiaceae</taxon>
        <taxon>Chlamydia/Chlamydophila group</taxon>
        <taxon>Chlamydia</taxon>
    </lineage>
</organism>
<keyword id="KW-0378">Hydrolase</keyword>
<keyword id="KW-0441">Lipid A biosynthesis</keyword>
<keyword id="KW-0444">Lipid biosynthesis</keyword>
<keyword id="KW-0443">Lipid metabolism</keyword>
<keyword id="KW-0479">Metal-binding</keyword>
<keyword id="KW-0862">Zinc</keyword>
<feature type="chain" id="PRO_0000191926" description="UDP-3-O-acyl-N-acetylglucosamine deacetylase">
    <location>
        <begin position="1"/>
        <end position="282"/>
    </location>
</feature>
<feature type="active site" description="Proton donor" evidence="1">
    <location>
        <position position="266"/>
    </location>
</feature>
<feature type="binding site" evidence="1">
    <location>
        <position position="81"/>
    </location>
    <ligand>
        <name>Zn(2+)</name>
        <dbReference type="ChEBI" id="CHEBI:29105"/>
    </ligand>
</feature>
<feature type="binding site" evidence="1">
    <location>
        <position position="239"/>
    </location>
    <ligand>
        <name>Zn(2+)</name>
        <dbReference type="ChEBI" id="CHEBI:29105"/>
    </ligand>
</feature>
<feature type="binding site" evidence="1">
    <location>
        <position position="243"/>
    </location>
    <ligand>
        <name>Zn(2+)</name>
        <dbReference type="ChEBI" id="CHEBI:29105"/>
    </ligand>
</feature>